<gene>
    <name evidence="1" type="primary">recX</name>
    <name type="ordered locus">GK0452</name>
</gene>
<protein>
    <recommendedName>
        <fullName evidence="1">Regulatory protein RecX</fullName>
    </recommendedName>
</protein>
<sequence>MGTIADIAATEQNAERFWIVVHRDGAPSLRLTVDQDVLLQFRLKKGMEISDDLLQHIVYADEVKKAYQQALYFLAHRMRSEHEVAAHLRKKGAPDSVIDEVLKKLRAERYVDDEAFAAAYVRTQKKTAAKGPLLVRAELERLGVPDRLIEQSLAEYTLDEQMAIARSLYEKAKKQRRDESARAFLERVRQQLMRKGFPHEVIAAVLADGGTHTEQEEREALSVQAEKAHRRYAHHPRPLYEQKMRQALYRKGFALDLINEWLRMHGNDE</sequence>
<evidence type="ECO:0000255" key="1">
    <source>
        <dbReference type="HAMAP-Rule" id="MF_01114"/>
    </source>
</evidence>
<name>RECX_GEOKA</name>
<reference key="1">
    <citation type="journal article" date="2004" name="Nucleic Acids Res.">
        <title>Thermoadaptation trait revealed by the genome sequence of thermophilic Geobacillus kaustophilus.</title>
        <authorList>
            <person name="Takami H."/>
            <person name="Takaki Y."/>
            <person name="Chee G.-J."/>
            <person name="Nishi S."/>
            <person name="Shimamura S."/>
            <person name="Suzuki H."/>
            <person name="Matsui S."/>
            <person name="Uchiyama I."/>
        </authorList>
    </citation>
    <scope>NUCLEOTIDE SEQUENCE [LARGE SCALE GENOMIC DNA]</scope>
    <source>
        <strain>HTA426</strain>
    </source>
</reference>
<proteinExistence type="inferred from homology"/>
<feature type="chain" id="PRO_1000065172" description="Regulatory protein RecX">
    <location>
        <begin position="1"/>
        <end position="269"/>
    </location>
</feature>
<accession>Q5L2U3</accession>
<organism>
    <name type="scientific">Geobacillus kaustophilus (strain HTA426)</name>
    <dbReference type="NCBI Taxonomy" id="235909"/>
    <lineage>
        <taxon>Bacteria</taxon>
        <taxon>Bacillati</taxon>
        <taxon>Bacillota</taxon>
        <taxon>Bacilli</taxon>
        <taxon>Bacillales</taxon>
        <taxon>Anoxybacillaceae</taxon>
        <taxon>Geobacillus</taxon>
        <taxon>Geobacillus thermoleovorans group</taxon>
    </lineage>
</organism>
<comment type="function">
    <text evidence="1">Modulates RecA activity.</text>
</comment>
<comment type="subcellular location">
    <subcellularLocation>
        <location evidence="1">Cytoplasm</location>
    </subcellularLocation>
</comment>
<comment type="similarity">
    <text evidence="1">Belongs to the RecX family.</text>
</comment>
<keyword id="KW-0963">Cytoplasm</keyword>
<keyword id="KW-1185">Reference proteome</keyword>
<dbReference type="EMBL" id="BA000043">
    <property type="protein sequence ID" value="BAD74737.1"/>
    <property type="molecule type" value="Genomic_DNA"/>
</dbReference>
<dbReference type="RefSeq" id="WP_011229956.1">
    <property type="nucleotide sequence ID" value="NC_006510.1"/>
</dbReference>
<dbReference type="SMR" id="Q5L2U3"/>
<dbReference type="STRING" id="235909.GK0452"/>
<dbReference type="KEGG" id="gka:GK0452"/>
<dbReference type="eggNOG" id="COG2137">
    <property type="taxonomic scope" value="Bacteria"/>
</dbReference>
<dbReference type="HOGENOM" id="CLU_066607_4_0_9"/>
<dbReference type="Proteomes" id="UP000001172">
    <property type="component" value="Chromosome"/>
</dbReference>
<dbReference type="GO" id="GO:0005737">
    <property type="term" value="C:cytoplasm"/>
    <property type="evidence" value="ECO:0007669"/>
    <property type="project" value="UniProtKB-SubCell"/>
</dbReference>
<dbReference type="GO" id="GO:0006282">
    <property type="term" value="P:regulation of DNA repair"/>
    <property type="evidence" value="ECO:0007669"/>
    <property type="project" value="UniProtKB-UniRule"/>
</dbReference>
<dbReference type="Gene3D" id="1.10.10.10">
    <property type="entry name" value="Winged helix-like DNA-binding domain superfamily/Winged helix DNA-binding domain"/>
    <property type="match status" value="4"/>
</dbReference>
<dbReference type="HAMAP" id="MF_01114">
    <property type="entry name" value="RecX"/>
    <property type="match status" value="1"/>
</dbReference>
<dbReference type="InterPro" id="IPR053926">
    <property type="entry name" value="RecX_HTH_1st"/>
</dbReference>
<dbReference type="InterPro" id="IPR053924">
    <property type="entry name" value="RecX_HTH_2nd"/>
</dbReference>
<dbReference type="InterPro" id="IPR053925">
    <property type="entry name" value="RecX_HTH_3rd"/>
</dbReference>
<dbReference type="InterPro" id="IPR003783">
    <property type="entry name" value="Regulatory_RecX"/>
</dbReference>
<dbReference type="InterPro" id="IPR036388">
    <property type="entry name" value="WH-like_DNA-bd_sf"/>
</dbReference>
<dbReference type="NCBIfam" id="NF010733">
    <property type="entry name" value="PRK14135.1"/>
    <property type="match status" value="1"/>
</dbReference>
<dbReference type="PANTHER" id="PTHR33602">
    <property type="entry name" value="REGULATORY PROTEIN RECX FAMILY PROTEIN"/>
    <property type="match status" value="1"/>
</dbReference>
<dbReference type="PANTHER" id="PTHR33602:SF1">
    <property type="entry name" value="REGULATORY PROTEIN RECX FAMILY PROTEIN"/>
    <property type="match status" value="1"/>
</dbReference>
<dbReference type="Pfam" id="PF21982">
    <property type="entry name" value="RecX_HTH1"/>
    <property type="match status" value="1"/>
</dbReference>
<dbReference type="Pfam" id="PF02631">
    <property type="entry name" value="RecX_HTH2"/>
    <property type="match status" value="1"/>
</dbReference>
<dbReference type="Pfam" id="PF21981">
    <property type="entry name" value="RecX_HTH3"/>
    <property type="match status" value="2"/>
</dbReference>